<evidence type="ECO:0000255" key="1">
    <source>
        <dbReference type="HAMAP-Rule" id="MF_00453"/>
    </source>
</evidence>
<dbReference type="EC" id="4.1.1.49" evidence="1"/>
<dbReference type="EMBL" id="CP001407">
    <property type="protein sequence ID" value="ACO28986.1"/>
    <property type="molecule type" value="Genomic_DNA"/>
</dbReference>
<dbReference type="RefSeq" id="WP_000108802.1">
    <property type="nucleotide sequence ID" value="NZ_CP009318.1"/>
</dbReference>
<dbReference type="SMR" id="C1EW38"/>
<dbReference type="GeneID" id="72451423"/>
<dbReference type="KEGG" id="bcx:BCA_4894"/>
<dbReference type="PATRIC" id="fig|572264.18.peg.4840"/>
<dbReference type="UniPathway" id="UPA00138"/>
<dbReference type="Proteomes" id="UP000002210">
    <property type="component" value="Chromosome"/>
</dbReference>
<dbReference type="GO" id="GO:0005829">
    <property type="term" value="C:cytosol"/>
    <property type="evidence" value="ECO:0007669"/>
    <property type="project" value="TreeGrafter"/>
</dbReference>
<dbReference type="GO" id="GO:0005524">
    <property type="term" value="F:ATP binding"/>
    <property type="evidence" value="ECO:0007669"/>
    <property type="project" value="UniProtKB-UniRule"/>
</dbReference>
<dbReference type="GO" id="GO:0046872">
    <property type="term" value="F:metal ion binding"/>
    <property type="evidence" value="ECO:0007669"/>
    <property type="project" value="UniProtKB-KW"/>
</dbReference>
<dbReference type="GO" id="GO:0004612">
    <property type="term" value="F:phosphoenolpyruvate carboxykinase (ATP) activity"/>
    <property type="evidence" value="ECO:0007669"/>
    <property type="project" value="UniProtKB-UniRule"/>
</dbReference>
<dbReference type="GO" id="GO:0006094">
    <property type="term" value="P:gluconeogenesis"/>
    <property type="evidence" value="ECO:0007669"/>
    <property type="project" value="UniProtKB-UniRule"/>
</dbReference>
<dbReference type="CDD" id="cd00484">
    <property type="entry name" value="PEPCK_ATP"/>
    <property type="match status" value="1"/>
</dbReference>
<dbReference type="FunFam" id="2.170.8.10:FF:000001">
    <property type="entry name" value="Phosphoenolpyruvate carboxykinase (ATP)"/>
    <property type="match status" value="1"/>
</dbReference>
<dbReference type="FunFam" id="3.40.449.10:FF:000001">
    <property type="entry name" value="Phosphoenolpyruvate carboxykinase (ATP)"/>
    <property type="match status" value="1"/>
</dbReference>
<dbReference type="Gene3D" id="3.90.228.20">
    <property type="match status" value="1"/>
</dbReference>
<dbReference type="Gene3D" id="3.40.449.10">
    <property type="entry name" value="Phosphoenolpyruvate Carboxykinase, domain 1"/>
    <property type="match status" value="1"/>
</dbReference>
<dbReference type="Gene3D" id="2.170.8.10">
    <property type="entry name" value="Phosphoenolpyruvate Carboxykinase, domain 2"/>
    <property type="match status" value="1"/>
</dbReference>
<dbReference type="HAMAP" id="MF_00453">
    <property type="entry name" value="PEPCK_ATP"/>
    <property type="match status" value="1"/>
</dbReference>
<dbReference type="InterPro" id="IPR001272">
    <property type="entry name" value="PEP_carboxykinase_ATP"/>
</dbReference>
<dbReference type="InterPro" id="IPR013035">
    <property type="entry name" value="PEP_carboxykinase_C"/>
</dbReference>
<dbReference type="InterPro" id="IPR008210">
    <property type="entry name" value="PEP_carboxykinase_N"/>
</dbReference>
<dbReference type="InterPro" id="IPR015994">
    <property type="entry name" value="PEPCK_ATP_CS"/>
</dbReference>
<dbReference type="NCBIfam" id="TIGR00224">
    <property type="entry name" value="pckA"/>
    <property type="match status" value="1"/>
</dbReference>
<dbReference type="NCBIfam" id="NF006820">
    <property type="entry name" value="PRK09344.1-2"/>
    <property type="match status" value="1"/>
</dbReference>
<dbReference type="NCBIfam" id="NF006821">
    <property type="entry name" value="PRK09344.1-3"/>
    <property type="match status" value="1"/>
</dbReference>
<dbReference type="PANTHER" id="PTHR30031:SF0">
    <property type="entry name" value="PHOSPHOENOLPYRUVATE CARBOXYKINASE (ATP)"/>
    <property type="match status" value="1"/>
</dbReference>
<dbReference type="PANTHER" id="PTHR30031">
    <property type="entry name" value="PHOSPHOENOLPYRUVATE CARBOXYKINASE ATP"/>
    <property type="match status" value="1"/>
</dbReference>
<dbReference type="Pfam" id="PF01293">
    <property type="entry name" value="PEPCK_ATP"/>
    <property type="match status" value="1"/>
</dbReference>
<dbReference type="PIRSF" id="PIRSF006294">
    <property type="entry name" value="PEP_crbxkin"/>
    <property type="match status" value="1"/>
</dbReference>
<dbReference type="SUPFAM" id="SSF68923">
    <property type="entry name" value="PEP carboxykinase N-terminal domain"/>
    <property type="match status" value="1"/>
</dbReference>
<dbReference type="SUPFAM" id="SSF53795">
    <property type="entry name" value="PEP carboxykinase-like"/>
    <property type="match status" value="1"/>
</dbReference>
<dbReference type="PROSITE" id="PS00532">
    <property type="entry name" value="PEPCK_ATP"/>
    <property type="match status" value="1"/>
</dbReference>
<name>PCKA_BACC3</name>
<protein>
    <recommendedName>
        <fullName evidence="1">Phosphoenolpyruvate carboxykinase (ATP)</fullName>
        <shortName evidence="1">PCK</shortName>
        <shortName evidence="1">PEP carboxykinase</shortName>
        <shortName evidence="1">PEPCK</shortName>
        <ecNumber evidence="1">4.1.1.49</ecNumber>
    </recommendedName>
</protein>
<proteinExistence type="inferred from homology"/>
<sequence>MSTVNVQIGLHELLNGSNAQIQLSVPQLVEKVLMRNEGKLTSTGAVSASTGKYTGRSPKDKFIVKEASVADKIAWGAVNQPISEEHFNKLYTKVLEYLKEKEELFVFKGFAGADRNYRLPIQVINEYAWHNLFVHQLFIRPTEEELTTHESEFTIVSAPNFKADPAVDGTNSEAFIMVSFEKRIVLIGGTEYAGEMKKSIFSIMNFLLPEQDILSMHCSANVGEEGDVALFFGLSGTGKTTLSADPNRKLIGDDEHGWSDNGVFNIEGGCYAKCVNLSHEKEPQIFDAITFGSVLENVIINDQTRIADYNDTTLTENTRAAYPMHAIDNIVLPSVAGHPNTIIFLTADASGVLPPISKLSKEQAMYHFLSGYTSKLAGTERGVTSPQATFSTCFGSPFLPLDASRYAEMLGEKIEKHDAKVFLVNTGWTGGEYGVGKRMNLGYTRAMIQAALNGELAKTETAKHDIFGLEVPLHVPGVPDEVLMPEQTWADKAAYKAKAIELANEFKANFKKFDSVSEDIINLGGPIA</sequence>
<keyword id="KW-0067">ATP-binding</keyword>
<keyword id="KW-0963">Cytoplasm</keyword>
<keyword id="KW-0210">Decarboxylase</keyword>
<keyword id="KW-0312">Gluconeogenesis</keyword>
<keyword id="KW-0456">Lyase</keyword>
<keyword id="KW-0464">Manganese</keyword>
<keyword id="KW-0479">Metal-binding</keyword>
<keyword id="KW-0547">Nucleotide-binding</keyword>
<gene>
    <name evidence="1" type="primary">pckA</name>
    <name type="ordered locus">BCA_4894</name>
</gene>
<feature type="chain" id="PRO_1000192309" description="Phosphoenolpyruvate carboxykinase (ATP)">
    <location>
        <begin position="1"/>
        <end position="528"/>
    </location>
</feature>
<feature type="binding site" evidence="1">
    <location>
        <position position="56"/>
    </location>
    <ligand>
        <name>substrate</name>
    </ligand>
</feature>
<feature type="binding site" evidence="1">
    <location>
        <position position="192"/>
    </location>
    <ligand>
        <name>substrate</name>
    </ligand>
</feature>
<feature type="binding site" evidence="1">
    <location>
        <position position="198"/>
    </location>
    <ligand>
        <name>ATP</name>
        <dbReference type="ChEBI" id="CHEBI:30616"/>
    </ligand>
</feature>
<feature type="binding site" evidence="1">
    <location>
        <position position="198"/>
    </location>
    <ligand>
        <name>Mn(2+)</name>
        <dbReference type="ChEBI" id="CHEBI:29035"/>
    </ligand>
</feature>
<feature type="binding site" evidence="1">
    <location>
        <position position="198"/>
    </location>
    <ligand>
        <name>substrate</name>
    </ligand>
</feature>
<feature type="binding site" evidence="1">
    <location>
        <position position="217"/>
    </location>
    <ligand>
        <name>ATP</name>
        <dbReference type="ChEBI" id="CHEBI:30616"/>
    </ligand>
</feature>
<feature type="binding site" evidence="1">
    <location>
        <position position="217"/>
    </location>
    <ligand>
        <name>Mn(2+)</name>
        <dbReference type="ChEBI" id="CHEBI:29035"/>
    </ligand>
</feature>
<feature type="binding site" evidence="1">
    <location>
        <begin position="233"/>
        <end position="241"/>
    </location>
    <ligand>
        <name>ATP</name>
        <dbReference type="ChEBI" id="CHEBI:30616"/>
    </ligand>
</feature>
<feature type="binding site" evidence="1">
    <location>
        <position position="254"/>
    </location>
    <ligand>
        <name>Mn(2+)</name>
        <dbReference type="ChEBI" id="CHEBI:29035"/>
    </ligand>
</feature>
<feature type="binding site" evidence="1">
    <location>
        <position position="282"/>
    </location>
    <ligand>
        <name>ATP</name>
        <dbReference type="ChEBI" id="CHEBI:30616"/>
    </ligand>
</feature>
<feature type="binding site" evidence="1">
    <location>
        <position position="319"/>
    </location>
    <ligand>
        <name>ATP</name>
        <dbReference type="ChEBI" id="CHEBI:30616"/>
    </ligand>
</feature>
<feature type="binding site" evidence="1">
    <location>
        <position position="319"/>
    </location>
    <ligand>
        <name>substrate</name>
    </ligand>
</feature>
<feature type="binding site" evidence="1">
    <location>
        <position position="444"/>
    </location>
    <ligand>
        <name>ATP</name>
        <dbReference type="ChEBI" id="CHEBI:30616"/>
    </ligand>
</feature>
<accession>C1EW38</accession>
<organism>
    <name type="scientific">Bacillus cereus (strain 03BB102)</name>
    <dbReference type="NCBI Taxonomy" id="572264"/>
    <lineage>
        <taxon>Bacteria</taxon>
        <taxon>Bacillati</taxon>
        <taxon>Bacillota</taxon>
        <taxon>Bacilli</taxon>
        <taxon>Bacillales</taxon>
        <taxon>Bacillaceae</taxon>
        <taxon>Bacillus</taxon>
        <taxon>Bacillus cereus group</taxon>
    </lineage>
</organism>
<reference key="1">
    <citation type="submission" date="2009-02" db="EMBL/GenBank/DDBJ databases">
        <title>Genome sequence of Bacillus cereus 03BB102.</title>
        <authorList>
            <person name="Dodson R.J."/>
            <person name="Jackson P."/>
            <person name="Munk A.C."/>
            <person name="Brettin T."/>
            <person name="Bruce D."/>
            <person name="Detter C."/>
            <person name="Tapia R."/>
            <person name="Han C."/>
            <person name="Sutton G."/>
            <person name="Sims D."/>
        </authorList>
    </citation>
    <scope>NUCLEOTIDE SEQUENCE [LARGE SCALE GENOMIC DNA]</scope>
    <source>
        <strain>03BB102</strain>
    </source>
</reference>
<comment type="function">
    <text evidence="1">Involved in the gluconeogenesis. Catalyzes the conversion of oxaloacetate (OAA) to phosphoenolpyruvate (PEP) through direct phosphoryl transfer between the nucleoside triphosphate and OAA.</text>
</comment>
<comment type="catalytic activity">
    <reaction evidence="1">
        <text>oxaloacetate + ATP = phosphoenolpyruvate + ADP + CO2</text>
        <dbReference type="Rhea" id="RHEA:18617"/>
        <dbReference type="ChEBI" id="CHEBI:16452"/>
        <dbReference type="ChEBI" id="CHEBI:16526"/>
        <dbReference type="ChEBI" id="CHEBI:30616"/>
        <dbReference type="ChEBI" id="CHEBI:58702"/>
        <dbReference type="ChEBI" id="CHEBI:456216"/>
        <dbReference type="EC" id="4.1.1.49"/>
    </reaction>
</comment>
<comment type="cofactor">
    <cofactor evidence="1">
        <name>Mn(2+)</name>
        <dbReference type="ChEBI" id="CHEBI:29035"/>
    </cofactor>
    <text evidence="1">Binds 1 Mn(2+) ion per subunit.</text>
</comment>
<comment type="pathway">
    <text evidence="1">Carbohydrate biosynthesis; gluconeogenesis.</text>
</comment>
<comment type="subcellular location">
    <subcellularLocation>
        <location evidence="1">Cytoplasm</location>
    </subcellularLocation>
</comment>
<comment type="similarity">
    <text evidence="1">Belongs to the phosphoenolpyruvate carboxykinase (ATP) family.</text>
</comment>